<organism>
    <name type="scientific">Homo sapiens</name>
    <name type="common">Human</name>
    <dbReference type="NCBI Taxonomy" id="9606"/>
    <lineage>
        <taxon>Eukaryota</taxon>
        <taxon>Metazoa</taxon>
        <taxon>Chordata</taxon>
        <taxon>Craniata</taxon>
        <taxon>Vertebrata</taxon>
        <taxon>Euteleostomi</taxon>
        <taxon>Mammalia</taxon>
        <taxon>Eutheria</taxon>
        <taxon>Euarchontoglires</taxon>
        <taxon>Primates</taxon>
        <taxon>Haplorrhini</taxon>
        <taxon>Catarrhini</taxon>
        <taxon>Hominidae</taxon>
        <taxon>Homo</taxon>
    </lineage>
</organism>
<proteinExistence type="evidence at protein level"/>
<protein>
    <recommendedName>
        <fullName>Polyadenylate-binding protein-interacting protein 2</fullName>
        <shortName>PABP-interacting protein 2</shortName>
        <shortName>PAIP-2</shortName>
        <shortName>Poly(A)-binding protein-interacting protein 2</shortName>
    </recommendedName>
</protein>
<feature type="chain" id="PRO_0000058179" description="Polyadenylate-binding protein-interacting protein 2">
    <location>
        <begin position="1"/>
        <end position="127"/>
    </location>
</feature>
<feature type="region of interest" description="Disordered" evidence="1">
    <location>
        <begin position="1"/>
        <end position="24"/>
    </location>
</feature>
<feature type="region of interest" description="PABPC1-interacting motif-1 (PAM1)">
    <location>
        <begin position="22"/>
        <end position="75"/>
    </location>
</feature>
<feature type="region of interest" description="PABPC1-interacting motif-2 (PAM2)">
    <location>
        <begin position="105"/>
        <end position="120"/>
    </location>
</feature>
<feature type="compositionally biased region" description="Polar residues" evidence="1">
    <location>
        <begin position="1"/>
        <end position="13"/>
    </location>
</feature>
<feature type="sequence conflict" description="In Ref. 3; CAB66575." evidence="5" ref="3">
    <original>D</original>
    <variation>E</variation>
    <location>
        <position position="98"/>
    </location>
</feature>
<feature type="sequence conflict" description="In Ref. 2; AAF36138." evidence="5" ref="2">
    <original>K</original>
    <variation>T</variation>
    <location>
        <position position="116"/>
    </location>
</feature>
<accession>Q9BPZ3</accession>
<accession>B2RBI1</accession>
<accession>D3DQC6</accession>
<accession>Q49A06</accession>
<accession>Q9H0Y5</accession>
<accession>Q9P0Q8</accession>
<evidence type="ECO:0000256" key="1">
    <source>
        <dbReference type="SAM" id="MobiDB-lite"/>
    </source>
</evidence>
<evidence type="ECO:0000269" key="2">
    <source>
    </source>
</evidence>
<evidence type="ECO:0000269" key="3">
    <source>
    </source>
</evidence>
<evidence type="ECO:0000269" key="4">
    <source>
    </source>
</evidence>
<evidence type="ECO:0000305" key="5"/>
<dbReference type="EMBL" id="AF317675">
    <property type="protein sequence ID" value="AAK11562.1"/>
    <property type="molecule type" value="mRNA"/>
</dbReference>
<dbReference type="EMBL" id="AF151052">
    <property type="protein sequence ID" value="AAF36138.1"/>
    <property type="molecule type" value="mRNA"/>
</dbReference>
<dbReference type="EMBL" id="AL136640">
    <property type="protein sequence ID" value="CAB66575.1"/>
    <property type="molecule type" value="mRNA"/>
</dbReference>
<dbReference type="EMBL" id="AK314672">
    <property type="protein sequence ID" value="BAG37228.1"/>
    <property type="molecule type" value="mRNA"/>
</dbReference>
<dbReference type="EMBL" id="CH471062">
    <property type="protein sequence ID" value="EAW62107.1"/>
    <property type="molecule type" value="Genomic_DNA"/>
</dbReference>
<dbReference type="EMBL" id="CH471062">
    <property type="protein sequence ID" value="EAW62108.1"/>
    <property type="molecule type" value="Genomic_DNA"/>
</dbReference>
<dbReference type="EMBL" id="CH471062">
    <property type="protein sequence ID" value="EAW62111.1"/>
    <property type="molecule type" value="Genomic_DNA"/>
</dbReference>
<dbReference type="EMBL" id="CH471062">
    <property type="protein sequence ID" value="EAW62112.1"/>
    <property type="molecule type" value="Genomic_DNA"/>
</dbReference>
<dbReference type="EMBL" id="BC001716">
    <property type="protein sequence ID" value="AAH01716.1"/>
    <property type="molecule type" value="mRNA"/>
</dbReference>
<dbReference type="EMBL" id="BC048106">
    <property type="protein sequence ID" value="AAH48106.1"/>
    <property type="molecule type" value="mRNA"/>
</dbReference>
<dbReference type="EMBL" id="BC062718">
    <property type="protein sequence ID" value="AAH62718.1"/>
    <property type="molecule type" value="mRNA"/>
</dbReference>
<dbReference type="CCDS" id="CCDS4211.1"/>
<dbReference type="RefSeq" id="NP_001028284.1">
    <property type="nucleotide sequence ID" value="NM_001033112.3"/>
</dbReference>
<dbReference type="RefSeq" id="NP_057564.3">
    <property type="nucleotide sequence ID" value="NM_016480.4"/>
</dbReference>
<dbReference type="RefSeq" id="XP_011541730.1">
    <property type="nucleotide sequence ID" value="XM_011543428.2"/>
</dbReference>
<dbReference type="RefSeq" id="XP_016865011.1">
    <property type="nucleotide sequence ID" value="XM_017009522.2"/>
</dbReference>
<dbReference type="RefSeq" id="XP_016865012.1">
    <property type="nucleotide sequence ID" value="XM_017009523.3"/>
</dbReference>
<dbReference type="RefSeq" id="XP_047273221.1">
    <property type="nucleotide sequence ID" value="XM_047417265.1"/>
</dbReference>
<dbReference type="RefSeq" id="XP_047273222.1">
    <property type="nucleotide sequence ID" value="XM_047417266.1"/>
</dbReference>
<dbReference type="RefSeq" id="XP_054208697.1">
    <property type="nucleotide sequence ID" value="XM_054352722.1"/>
</dbReference>
<dbReference type="RefSeq" id="XP_054208698.1">
    <property type="nucleotide sequence ID" value="XM_054352723.1"/>
</dbReference>
<dbReference type="RefSeq" id="XP_054208699.1">
    <property type="nucleotide sequence ID" value="XM_054352724.1"/>
</dbReference>
<dbReference type="RefSeq" id="XP_054208700.1">
    <property type="nucleotide sequence ID" value="XM_054352725.1"/>
</dbReference>
<dbReference type="PDB" id="1JGN">
    <property type="method" value="NMR"/>
    <property type="chains" value="B=106-127"/>
</dbReference>
<dbReference type="PDB" id="3KUS">
    <property type="method" value="X-ray"/>
    <property type="resolution" value="1.40 A"/>
    <property type="chains" value="C/D=109-123"/>
</dbReference>
<dbReference type="PDB" id="3KUT">
    <property type="method" value="X-ray"/>
    <property type="resolution" value="1.50 A"/>
    <property type="chains" value="C/D=109-125"/>
</dbReference>
<dbReference type="PDBsum" id="1JGN"/>
<dbReference type="PDBsum" id="3KUS"/>
<dbReference type="PDBsum" id="3KUT"/>
<dbReference type="BMRB" id="Q9BPZ3"/>
<dbReference type="SMR" id="Q9BPZ3"/>
<dbReference type="BioGRID" id="119404">
    <property type="interactions" value="63"/>
</dbReference>
<dbReference type="ELM" id="Q9BPZ3"/>
<dbReference type="FunCoup" id="Q9BPZ3">
    <property type="interactions" value="1480"/>
</dbReference>
<dbReference type="IntAct" id="Q9BPZ3">
    <property type="interactions" value="21"/>
</dbReference>
<dbReference type="MINT" id="Q9BPZ3"/>
<dbReference type="STRING" id="9606.ENSP00000378275"/>
<dbReference type="MoonDB" id="Q9BPZ3">
    <property type="type" value="Predicted"/>
</dbReference>
<dbReference type="iPTMnet" id="Q9BPZ3"/>
<dbReference type="PhosphoSitePlus" id="Q9BPZ3"/>
<dbReference type="BioMuta" id="PAIP2"/>
<dbReference type="DMDM" id="46397013"/>
<dbReference type="jPOST" id="Q9BPZ3"/>
<dbReference type="MassIVE" id="Q9BPZ3"/>
<dbReference type="PaxDb" id="9606-ENSP00000378275"/>
<dbReference type="PeptideAtlas" id="Q9BPZ3"/>
<dbReference type="ProteomicsDB" id="78598"/>
<dbReference type="Pumba" id="Q9BPZ3"/>
<dbReference type="Antibodypedia" id="26731">
    <property type="antibodies" value="185 antibodies from 24 providers"/>
</dbReference>
<dbReference type="DNASU" id="51247"/>
<dbReference type="Ensembl" id="ENST00000265192.9">
    <property type="protein sequence ID" value="ENSP00000265192.4"/>
    <property type="gene ID" value="ENSG00000120727.13"/>
</dbReference>
<dbReference type="Ensembl" id="ENST00000394795.6">
    <property type="protein sequence ID" value="ENSP00000378275.2"/>
    <property type="gene ID" value="ENSG00000120727.13"/>
</dbReference>
<dbReference type="Ensembl" id="ENST00000510080.1">
    <property type="protein sequence ID" value="ENSP00000422508.1"/>
    <property type="gene ID" value="ENSG00000120727.13"/>
</dbReference>
<dbReference type="GeneID" id="51247"/>
<dbReference type="KEGG" id="hsa:51247"/>
<dbReference type="MANE-Select" id="ENST00000265192.9">
    <property type="protein sequence ID" value="ENSP00000265192.4"/>
    <property type="RefSeq nucleotide sequence ID" value="NM_016480.5"/>
    <property type="RefSeq protein sequence ID" value="NP_057564.3"/>
</dbReference>
<dbReference type="UCSC" id="uc003led.5">
    <property type="organism name" value="human"/>
</dbReference>
<dbReference type="AGR" id="HGNC:17970"/>
<dbReference type="CTD" id="51247"/>
<dbReference type="DisGeNET" id="51247"/>
<dbReference type="GeneCards" id="PAIP2"/>
<dbReference type="HGNC" id="HGNC:17970">
    <property type="gene designation" value="PAIP2"/>
</dbReference>
<dbReference type="HPA" id="ENSG00000120727">
    <property type="expression patterns" value="Low tissue specificity"/>
</dbReference>
<dbReference type="MIM" id="605604">
    <property type="type" value="gene"/>
</dbReference>
<dbReference type="neXtProt" id="NX_Q9BPZ3"/>
<dbReference type="OpenTargets" id="ENSG00000120727"/>
<dbReference type="PharmGKB" id="PA134897284"/>
<dbReference type="VEuPathDB" id="HostDB:ENSG00000120727"/>
<dbReference type="eggNOG" id="ENOG502RZKX">
    <property type="taxonomic scope" value="Eukaryota"/>
</dbReference>
<dbReference type="GeneTree" id="ENSGT00390000017284"/>
<dbReference type="HOGENOM" id="CLU_134152_0_0_1"/>
<dbReference type="InParanoid" id="Q9BPZ3"/>
<dbReference type="OMA" id="PGIQKHN"/>
<dbReference type="OrthoDB" id="5985142at2759"/>
<dbReference type="PAN-GO" id="Q9BPZ3">
    <property type="GO annotations" value="3 GO annotations based on evolutionary models"/>
</dbReference>
<dbReference type="PhylomeDB" id="Q9BPZ3"/>
<dbReference type="TreeFam" id="TF326855"/>
<dbReference type="PathwayCommons" id="Q9BPZ3"/>
<dbReference type="SignaLink" id="Q9BPZ3"/>
<dbReference type="SIGNOR" id="Q9BPZ3"/>
<dbReference type="BioGRID-ORCS" id="51247">
    <property type="hits" value="21 hits in 1145 CRISPR screens"/>
</dbReference>
<dbReference type="ChiTaRS" id="PAIP2">
    <property type="organism name" value="human"/>
</dbReference>
<dbReference type="EvolutionaryTrace" id="Q9BPZ3"/>
<dbReference type="GeneWiki" id="PAIP2"/>
<dbReference type="GenomeRNAi" id="51247"/>
<dbReference type="Pharos" id="Q9BPZ3">
    <property type="development level" value="Tbio"/>
</dbReference>
<dbReference type="PRO" id="PR:Q9BPZ3"/>
<dbReference type="Proteomes" id="UP000005640">
    <property type="component" value="Chromosome 5"/>
</dbReference>
<dbReference type="RNAct" id="Q9BPZ3">
    <property type="molecule type" value="protein"/>
</dbReference>
<dbReference type="Bgee" id="ENSG00000120727">
    <property type="expression patterns" value="Expressed in cardiac muscle of right atrium and 197 other cell types or tissues"/>
</dbReference>
<dbReference type="ExpressionAtlas" id="Q9BPZ3">
    <property type="expression patterns" value="baseline and differential"/>
</dbReference>
<dbReference type="GO" id="GO:0005737">
    <property type="term" value="C:cytoplasm"/>
    <property type="evidence" value="ECO:0000314"/>
    <property type="project" value="UniProtKB"/>
</dbReference>
<dbReference type="GO" id="GO:0003729">
    <property type="term" value="F:mRNA binding"/>
    <property type="evidence" value="ECO:0007669"/>
    <property type="project" value="Ensembl"/>
</dbReference>
<dbReference type="GO" id="GO:0000900">
    <property type="term" value="F:mRNA regulatory element binding translation repressor activity"/>
    <property type="evidence" value="ECO:0007669"/>
    <property type="project" value="InterPro"/>
</dbReference>
<dbReference type="GO" id="GO:0030371">
    <property type="term" value="F:translation repressor activity"/>
    <property type="evidence" value="ECO:0000314"/>
    <property type="project" value="UniProtKB"/>
</dbReference>
<dbReference type="GO" id="GO:0007613">
    <property type="term" value="P:memory"/>
    <property type="evidence" value="ECO:0007669"/>
    <property type="project" value="Ensembl"/>
</dbReference>
<dbReference type="GO" id="GO:0017148">
    <property type="term" value="P:negative regulation of translation"/>
    <property type="evidence" value="ECO:0000318"/>
    <property type="project" value="GO_Central"/>
</dbReference>
<dbReference type="GO" id="GO:0045947">
    <property type="term" value="P:negative regulation of translational initiation"/>
    <property type="evidence" value="ECO:0000314"/>
    <property type="project" value="UniProtKB"/>
</dbReference>
<dbReference type="GO" id="GO:1900271">
    <property type="term" value="P:regulation of long-term synaptic potentiation"/>
    <property type="evidence" value="ECO:0007669"/>
    <property type="project" value="Ensembl"/>
</dbReference>
<dbReference type="GO" id="GO:0007283">
    <property type="term" value="P:spermatogenesis"/>
    <property type="evidence" value="ECO:0007669"/>
    <property type="project" value="Ensembl"/>
</dbReference>
<dbReference type="GO" id="GO:0006412">
    <property type="term" value="P:translation"/>
    <property type="evidence" value="ECO:0007669"/>
    <property type="project" value="Ensembl"/>
</dbReference>
<dbReference type="IDEAL" id="IID00582"/>
<dbReference type="InterPro" id="IPR040396">
    <property type="entry name" value="PAIP2-like"/>
</dbReference>
<dbReference type="InterPro" id="IPR009818">
    <property type="entry name" value="PAM2_motif"/>
</dbReference>
<dbReference type="PANTHER" id="PTHR13154">
    <property type="entry name" value="POLYADENYLATE-BINDING PROTEIN-INTERACTING PROTEIN 2"/>
    <property type="match status" value="1"/>
</dbReference>
<dbReference type="PANTHER" id="PTHR13154:SF2">
    <property type="entry name" value="POLYADENYLATE-BINDING PROTEIN-INTERACTING PROTEIN 2"/>
    <property type="match status" value="1"/>
</dbReference>
<dbReference type="Pfam" id="PF07145">
    <property type="entry name" value="PAM2"/>
    <property type="match status" value="1"/>
</dbReference>
<keyword id="KW-0002">3D-structure</keyword>
<keyword id="KW-0963">Cytoplasm</keyword>
<keyword id="KW-1267">Proteomics identification</keyword>
<keyword id="KW-1185">Reference proteome</keyword>
<keyword id="KW-0810">Translation regulation</keyword>
<keyword id="KW-0832">Ubl conjugation</keyword>
<gene>
    <name type="primary">PAIP2</name>
    <name type="synonym">PAIP2A</name>
    <name type="ORF">HSPC218</name>
</gene>
<sequence length="127" mass="14984">MKDPSRSSTSPSIINEDVIINGHSHEDDNPFAEYMWMENEEEFNRQIEEELWEEEFIERCFQEMLEEEEEHEWFIPARDLPQTMDQIQDQFNDLVISDGSSLEDLVVKSNLNPNAKEFVPGVKYGNI</sequence>
<comment type="function">
    <text evidence="2">Acts as a repressor in the regulation of translation initiation of poly(A)-containing mRNAs. Its inhibitory activity on translation is mediated via its action on PABPC1. Displaces the interaction of PABPC1 with poly(A) RNA and competes with PAIP1 for binding to PABPC1. Its association with PABPC1 results in disruption of the cytoplasmic poly(A) RNP structure organization.</text>
</comment>
<comment type="subunit">
    <text evidence="2 3">Interacts with the second and third RRM domains and C-terminus regions of PABPC1 in a 2:1 stoichiometry.</text>
</comment>
<comment type="interaction">
    <interactant intactId="EBI-2957445">
        <id>Q9BPZ3</id>
    </interactant>
    <interactant intactId="EBI-395638">
        <id>O14645</id>
        <label>DNALI1</label>
    </interactant>
    <organismsDiffer>false</organismsDiffer>
    <experiments>3</experiments>
</comment>
<comment type="interaction">
    <interactant intactId="EBI-2957445">
        <id>Q9BPZ3</id>
    </interactant>
    <interactant intactId="EBI-948266">
        <id>O14901</id>
        <label>KLF11</label>
    </interactant>
    <organismsDiffer>false</organismsDiffer>
    <experiments>3</experiments>
</comment>
<comment type="interaction">
    <interactant intactId="EBI-2957445">
        <id>Q9BPZ3</id>
    </interactant>
    <interactant intactId="EBI-718177">
        <id>Q99608</id>
        <label>NDN</label>
    </interactant>
    <organismsDiffer>false</organismsDiffer>
    <experiments>6</experiments>
</comment>
<comment type="interaction">
    <interactant intactId="EBI-2957445">
        <id>Q9BPZ3</id>
    </interactant>
    <interactant intactId="EBI-2811583">
        <id>Q9BVL2</id>
        <label>NUP58</label>
    </interactant>
    <organismsDiffer>false</organismsDiffer>
    <experiments>3</experiments>
</comment>
<comment type="interaction">
    <interactant intactId="EBI-2957445">
        <id>Q9BPZ3</id>
    </interactant>
    <interactant intactId="EBI-81531">
        <id>P11940</id>
        <label>PABPC1</label>
    </interactant>
    <organismsDiffer>false</organismsDiffer>
    <experiments>15</experiments>
</comment>
<comment type="interaction">
    <interactant intactId="EBI-2957445">
        <id>Q9BPZ3</id>
    </interactant>
    <interactant intactId="EBI-2880076">
        <id>Q96DU9</id>
        <label>PABPC5</label>
    </interactant>
    <organismsDiffer>false</organismsDiffer>
    <experiments>5</experiments>
</comment>
<comment type="interaction">
    <interactant intactId="EBI-2957445">
        <id>Q9BPZ3</id>
    </interactant>
    <interactant intactId="EBI-358329">
        <id>O95071</id>
        <label>UBR5</label>
    </interactant>
    <organismsDiffer>false</organismsDiffer>
    <experiments>5</experiments>
</comment>
<comment type="subcellular location">
    <subcellularLocation>
        <location evidence="2">Cytoplasm</location>
    </subcellularLocation>
</comment>
<comment type="tissue specificity">
    <text evidence="4">Expressed at highest level in testis, but also abundant in brain, cervix, lung, ovary, placenta, adipose tissue, thymus and thyroid.</text>
</comment>
<comment type="domain">
    <text>Only the PABPC1-interacting motif-1 (PAM1) interferes with the binding of PABPC1 to poly(A) RNA and translation initiation.</text>
</comment>
<comment type="PTM">
    <text evidence="4">Ubiquitinated, leading to its degradation by the proteasome.</text>
</comment>
<comment type="similarity">
    <text evidence="5">Belongs to the PAIP2 family.</text>
</comment>
<reference key="1">
    <citation type="journal article" date="2001" name="Mol. Cell">
        <title>Translational repression by a novel partner of human poly(A) binding protein, Paip2.</title>
        <authorList>
            <person name="Khaleghpour K."/>
            <person name="Svitkin Y.V."/>
            <person name="Craig A.W.B."/>
            <person name="DeMaria C.T."/>
            <person name="Deo R.C."/>
            <person name="Burley S.K."/>
            <person name="Sonenberg N."/>
        </authorList>
    </citation>
    <scope>NUCLEOTIDE SEQUENCE [MRNA]</scope>
    <scope>SUBCELLULAR LOCATION</scope>
    <scope>FUNCTION IN TRANSLATION INHIBITION</scope>
    <scope>INTERACTION WITH PABPC1</scope>
    <source>
        <tissue>Placenta</tissue>
    </source>
</reference>
<reference key="2">
    <citation type="journal article" date="2000" name="Genome Res.">
        <title>Cloning and functional analysis of cDNAs with open reading frames for 300 previously undefined genes expressed in CD34+ hematopoietic stem/progenitor cells.</title>
        <authorList>
            <person name="Zhang Q.-H."/>
            <person name="Ye M."/>
            <person name="Wu X.-Y."/>
            <person name="Ren S.-X."/>
            <person name="Zhao M."/>
            <person name="Zhao C.-J."/>
            <person name="Fu G."/>
            <person name="Shen Y."/>
            <person name="Fan H.-Y."/>
            <person name="Lu G."/>
            <person name="Zhong M."/>
            <person name="Xu X.-R."/>
            <person name="Han Z.-G."/>
            <person name="Zhang J.-W."/>
            <person name="Tao J."/>
            <person name="Huang Q.-H."/>
            <person name="Zhou J."/>
            <person name="Hu G.-X."/>
            <person name="Gu J."/>
            <person name="Chen S.-J."/>
            <person name="Chen Z."/>
        </authorList>
    </citation>
    <scope>NUCLEOTIDE SEQUENCE [LARGE SCALE MRNA]</scope>
    <source>
        <tissue>Umbilical cord blood</tissue>
    </source>
</reference>
<reference key="3">
    <citation type="journal article" date="2001" name="Genome Res.">
        <title>Towards a catalog of human genes and proteins: sequencing and analysis of 500 novel complete protein coding human cDNAs.</title>
        <authorList>
            <person name="Wiemann S."/>
            <person name="Weil B."/>
            <person name="Wellenreuther R."/>
            <person name="Gassenhuber J."/>
            <person name="Glassl S."/>
            <person name="Ansorge W."/>
            <person name="Boecher M."/>
            <person name="Bloecker H."/>
            <person name="Bauersachs S."/>
            <person name="Blum H."/>
            <person name="Lauber J."/>
            <person name="Duesterhoeft A."/>
            <person name="Beyer A."/>
            <person name="Koehrer K."/>
            <person name="Strack N."/>
            <person name="Mewes H.-W."/>
            <person name="Ottenwaelder B."/>
            <person name="Obermaier B."/>
            <person name="Tampe J."/>
            <person name="Heubner D."/>
            <person name="Wambutt R."/>
            <person name="Korn B."/>
            <person name="Klein M."/>
            <person name="Poustka A."/>
        </authorList>
    </citation>
    <scope>NUCLEOTIDE SEQUENCE [LARGE SCALE MRNA]</scope>
    <source>
        <tissue>Fetal brain</tissue>
    </source>
</reference>
<reference key="4">
    <citation type="journal article" date="2004" name="Nat. Genet.">
        <title>Complete sequencing and characterization of 21,243 full-length human cDNAs.</title>
        <authorList>
            <person name="Ota T."/>
            <person name="Suzuki Y."/>
            <person name="Nishikawa T."/>
            <person name="Otsuki T."/>
            <person name="Sugiyama T."/>
            <person name="Irie R."/>
            <person name="Wakamatsu A."/>
            <person name="Hayashi K."/>
            <person name="Sato H."/>
            <person name="Nagai K."/>
            <person name="Kimura K."/>
            <person name="Makita H."/>
            <person name="Sekine M."/>
            <person name="Obayashi M."/>
            <person name="Nishi T."/>
            <person name="Shibahara T."/>
            <person name="Tanaka T."/>
            <person name="Ishii S."/>
            <person name="Yamamoto J."/>
            <person name="Saito K."/>
            <person name="Kawai Y."/>
            <person name="Isono Y."/>
            <person name="Nakamura Y."/>
            <person name="Nagahari K."/>
            <person name="Murakami K."/>
            <person name="Yasuda T."/>
            <person name="Iwayanagi T."/>
            <person name="Wagatsuma M."/>
            <person name="Shiratori A."/>
            <person name="Sudo H."/>
            <person name="Hosoiri T."/>
            <person name="Kaku Y."/>
            <person name="Kodaira H."/>
            <person name="Kondo H."/>
            <person name="Sugawara M."/>
            <person name="Takahashi M."/>
            <person name="Kanda K."/>
            <person name="Yokoi T."/>
            <person name="Furuya T."/>
            <person name="Kikkawa E."/>
            <person name="Omura Y."/>
            <person name="Abe K."/>
            <person name="Kamihara K."/>
            <person name="Katsuta N."/>
            <person name="Sato K."/>
            <person name="Tanikawa M."/>
            <person name="Yamazaki M."/>
            <person name="Ninomiya K."/>
            <person name="Ishibashi T."/>
            <person name="Yamashita H."/>
            <person name="Murakawa K."/>
            <person name="Fujimori K."/>
            <person name="Tanai H."/>
            <person name="Kimata M."/>
            <person name="Watanabe M."/>
            <person name="Hiraoka S."/>
            <person name="Chiba Y."/>
            <person name="Ishida S."/>
            <person name="Ono Y."/>
            <person name="Takiguchi S."/>
            <person name="Watanabe S."/>
            <person name="Yosida M."/>
            <person name="Hotuta T."/>
            <person name="Kusano J."/>
            <person name="Kanehori K."/>
            <person name="Takahashi-Fujii A."/>
            <person name="Hara H."/>
            <person name="Tanase T.-O."/>
            <person name="Nomura Y."/>
            <person name="Togiya S."/>
            <person name="Komai F."/>
            <person name="Hara R."/>
            <person name="Takeuchi K."/>
            <person name="Arita M."/>
            <person name="Imose N."/>
            <person name="Musashino K."/>
            <person name="Yuuki H."/>
            <person name="Oshima A."/>
            <person name="Sasaki N."/>
            <person name="Aotsuka S."/>
            <person name="Yoshikawa Y."/>
            <person name="Matsunawa H."/>
            <person name="Ichihara T."/>
            <person name="Shiohata N."/>
            <person name="Sano S."/>
            <person name="Moriya S."/>
            <person name="Momiyama H."/>
            <person name="Satoh N."/>
            <person name="Takami S."/>
            <person name="Terashima Y."/>
            <person name="Suzuki O."/>
            <person name="Nakagawa S."/>
            <person name="Senoh A."/>
            <person name="Mizoguchi H."/>
            <person name="Goto Y."/>
            <person name="Shimizu F."/>
            <person name="Wakebe H."/>
            <person name="Hishigaki H."/>
            <person name="Watanabe T."/>
            <person name="Sugiyama A."/>
            <person name="Takemoto M."/>
            <person name="Kawakami B."/>
            <person name="Yamazaki M."/>
            <person name="Watanabe K."/>
            <person name="Kumagai A."/>
            <person name="Itakura S."/>
            <person name="Fukuzumi Y."/>
            <person name="Fujimori Y."/>
            <person name="Komiyama M."/>
            <person name="Tashiro H."/>
            <person name="Tanigami A."/>
            <person name="Fujiwara T."/>
            <person name="Ono T."/>
            <person name="Yamada K."/>
            <person name="Fujii Y."/>
            <person name="Ozaki K."/>
            <person name="Hirao M."/>
            <person name="Ohmori Y."/>
            <person name="Kawabata A."/>
            <person name="Hikiji T."/>
            <person name="Kobatake N."/>
            <person name="Inagaki H."/>
            <person name="Ikema Y."/>
            <person name="Okamoto S."/>
            <person name="Okitani R."/>
            <person name="Kawakami T."/>
            <person name="Noguchi S."/>
            <person name="Itoh T."/>
            <person name="Shigeta K."/>
            <person name="Senba T."/>
            <person name="Matsumura K."/>
            <person name="Nakajima Y."/>
            <person name="Mizuno T."/>
            <person name="Morinaga M."/>
            <person name="Sasaki M."/>
            <person name="Togashi T."/>
            <person name="Oyama M."/>
            <person name="Hata H."/>
            <person name="Watanabe M."/>
            <person name="Komatsu T."/>
            <person name="Mizushima-Sugano J."/>
            <person name="Satoh T."/>
            <person name="Shirai Y."/>
            <person name="Takahashi Y."/>
            <person name="Nakagawa K."/>
            <person name="Okumura K."/>
            <person name="Nagase T."/>
            <person name="Nomura N."/>
            <person name="Kikuchi H."/>
            <person name="Masuho Y."/>
            <person name="Yamashita R."/>
            <person name="Nakai K."/>
            <person name="Yada T."/>
            <person name="Nakamura Y."/>
            <person name="Ohara O."/>
            <person name="Isogai T."/>
            <person name="Sugano S."/>
        </authorList>
    </citation>
    <scope>NUCLEOTIDE SEQUENCE [LARGE SCALE MRNA]</scope>
</reference>
<reference key="5">
    <citation type="submission" date="2005-09" db="EMBL/GenBank/DDBJ databases">
        <authorList>
            <person name="Mural R.J."/>
            <person name="Istrail S."/>
            <person name="Sutton G.G."/>
            <person name="Florea L."/>
            <person name="Halpern A.L."/>
            <person name="Mobarry C.M."/>
            <person name="Lippert R."/>
            <person name="Walenz B."/>
            <person name="Shatkay H."/>
            <person name="Dew I."/>
            <person name="Miller J.R."/>
            <person name="Flanigan M.J."/>
            <person name="Edwards N.J."/>
            <person name="Bolanos R."/>
            <person name="Fasulo D."/>
            <person name="Halldorsson B.V."/>
            <person name="Hannenhalli S."/>
            <person name="Turner R."/>
            <person name="Yooseph S."/>
            <person name="Lu F."/>
            <person name="Nusskern D.R."/>
            <person name="Shue B.C."/>
            <person name="Zheng X.H."/>
            <person name="Zhong F."/>
            <person name="Delcher A.L."/>
            <person name="Huson D.H."/>
            <person name="Kravitz S.A."/>
            <person name="Mouchard L."/>
            <person name="Reinert K."/>
            <person name="Remington K.A."/>
            <person name="Clark A.G."/>
            <person name="Waterman M.S."/>
            <person name="Eichler E.E."/>
            <person name="Adams M.D."/>
            <person name="Hunkapiller M.W."/>
            <person name="Myers E.W."/>
            <person name="Venter J.C."/>
        </authorList>
    </citation>
    <scope>NUCLEOTIDE SEQUENCE [LARGE SCALE GENOMIC DNA]</scope>
</reference>
<reference key="6">
    <citation type="journal article" date="2004" name="Genome Res.">
        <title>The status, quality, and expansion of the NIH full-length cDNA project: the Mammalian Gene Collection (MGC).</title>
        <authorList>
            <consortium name="The MGC Project Team"/>
        </authorList>
    </citation>
    <scope>NUCLEOTIDE SEQUENCE [LARGE SCALE MRNA]</scope>
    <source>
        <tissue>Eye</tissue>
        <tissue>Testis</tissue>
    </source>
</reference>
<reference key="7">
    <citation type="journal article" date="2001" name="Mol. Cell. Biol.">
        <title>Dual interactions of the translational repressor Paip2 with poly(A) binding protein.</title>
        <authorList>
            <person name="Khaleghpour K."/>
            <person name="Kahvejian A."/>
            <person name="De Crescenzo G."/>
            <person name="Roy G."/>
            <person name="Svitkin Y.V."/>
            <person name="Imataka H."/>
            <person name="O'Connor-McCourt M."/>
            <person name="Sonenberg N."/>
        </authorList>
    </citation>
    <scope>INTERACTION WITH PABPC1</scope>
</reference>
<reference key="8">
    <citation type="journal article" date="2006" name="RNA">
        <title>Regulation of poly(A) binding protein function in translation: Characterization of the Paip2 homolog, Paip2B.</title>
        <authorList>
            <person name="Berlanga J.J."/>
            <person name="Baass A."/>
            <person name="Sonenberg N."/>
        </authorList>
    </citation>
    <scope>TISSUE SPECIFICITY</scope>
    <scope>UBIQUITINATION</scope>
</reference>
<reference key="9">
    <citation type="journal article" date="2001" name="Proc. Natl. Acad. Sci. U.S.A.">
        <title>Structure and function of the C-terminal PABC domain of human poly(A)-binding protein.</title>
        <authorList>
            <person name="Kozlov G."/>
            <person name="Trempe J.F."/>
            <person name="Khaleghpour K."/>
            <person name="Kahvejian A."/>
            <person name="Ekiel I."/>
            <person name="Gehring K."/>
        </authorList>
    </citation>
    <scope>STRUCTURE BY NMR OF 106-127</scope>
</reference>
<name>PAIP2_HUMAN</name>